<sequence>MEDFVRQCFNPMIVELAEKAMKEYGEDPRIETNKFAAICTHMEVSFMYSDFHFINERGESIIVESGDPNALLKHRFEIIEGRDRAMAWTVVNSICNTTGVGKPKFLPDLYDYKEDRFIEIGVTRREVHIYYLEKANKIKSEETHIHIFSFTGEEMATKADYTLDEESRARIKTRLFTIRQEMASRGLWDSFRQSERGEETIEERFEITGTMRRLADQSLPPNFSSLENFRAYVDGFEPNGYIEGKLSQMSKEVNARIEPFLKTTPRPLRLPGGPPCFQRSKFLLMDALKLSIEDPSHEGEGIPLYDAIKCMKTFFGWKEPIIVKPHEKGINSNYLLAWKQVLAEIQDIESEKKVPRTKNIKKTSQLKWALGENMAPEKVDFDDCKDVSDLKQYDSDEPEFRSLASWIQSEFNKACELTDSSWIELDEIGEDVAPIEHIASMRRNYFTAEVSHCRATEYIMKGVYINTALLNASCAAMDDFQLIPMISKCRTKEGRRKTNLYGFIIKGRSHLRNDTDVVNFVSMEFSLTDPRLEPHKWEKYCVLEIGDMLLRTSIGQVSRPMFLYVRTNGTSKIKMKWGMEMRRCLLQSLQQIESMIEAESSVKEKDMTKEFFENKSETWPIGESPKGVEEGSIGKVCRTLLAKSVFNSLYASPQLEGFSAESRKLLLIVQALRDNLEPGTFDLGGLYESIEECLINDPWVLLNASWFNSFLTHALR</sequence>
<evidence type="ECO:0000250" key="1">
    <source>
        <dbReference type="UniProtKB" id="P03433"/>
    </source>
</evidence>
<evidence type="ECO:0000255" key="2">
    <source>
        <dbReference type="HAMAP-Rule" id="MF_04063"/>
    </source>
</evidence>
<proteinExistence type="evidence at protein level"/>
<keyword id="KW-0002">3D-structure</keyword>
<keyword id="KW-1157">Cap snatching</keyword>
<keyword id="KW-0255">Endonuclease</keyword>
<keyword id="KW-1262">Eukaryotic host gene expression shutoff by virus</keyword>
<keyword id="KW-1191">Eukaryotic host transcription shutoff by virus</keyword>
<keyword id="KW-1035">Host cytoplasm</keyword>
<keyword id="KW-1190">Host gene expression shutoff by virus</keyword>
<keyword id="KW-1048">Host nucleus</keyword>
<keyword id="KW-0945">Host-virus interaction</keyword>
<keyword id="KW-0378">Hydrolase</keyword>
<keyword id="KW-1104">Inhibition of host RNA polymerase II by virus</keyword>
<keyword id="KW-0464">Manganese</keyword>
<keyword id="KW-0479">Metal-binding</keyword>
<keyword id="KW-0540">Nuclease</keyword>
<keyword id="KW-0597">Phosphoprotein</keyword>
<keyword id="KW-0688">Ribosomal frameshifting</keyword>
<feature type="chain" id="PRO_0000078804" description="Polymerase acidic protein">
    <location>
        <begin position="1"/>
        <end position="716"/>
    </location>
</feature>
<feature type="short sequence motif" description="Nuclear localization signal 1 (NLS1)" evidence="1 2">
    <location>
        <begin position="124"/>
        <end position="139"/>
    </location>
</feature>
<feature type="short sequence motif" description="Nuclear localization signal 2 (NLS2)" evidence="1 2">
    <location>
        <begin position="184"/>
        <end position="247"/>
    </location>
</feature>
<feature type="binding site" evidence="2">
    <location>
        <position position="41"/>
    </location>
    <ligand>
        <name>Mn(2+)</name>
        <dbReference type="ChEBI" id="CHEBI:29035"/>
        <label>1</label>
    </ligand>
</feature>
<feature type="binding site" evidence="2">
    <location>
        <position position="80"/>
    </location>
    <ligand>
        <name>Mn(2+)</name>
        <dbReference type="ChEBI" id="CHEBI:29035"/>
        <label>2</label>
    </ligand>
</feature>
<feature type="binding site" evidence="2">
    <location>
        <position position="108"/>
    </location>
    <ligand>
        <name>Mn(2+)</name>
        <dbReference type="ChEBI" id="CHEBI:29035"/>
        <label>1</label>
    </ligand>
</feature>
<feature type="binding site" evidence="2">
    <location>
        <position position="108"/>
    </location>
    <ligand>
        <name>Mn(2+)</name>
        <dbReference type="ChEBI" id="CHEBI:29035"/>
        <label>2</label>
    </ligand>
</feature>
<feature type="binding site" evidence="2">
    <location>
        <position position="119"/>
    </location>
    <ligand>
        <name>Mn(2+)</name>
        <dbReference type="ChEBI" id="CHEBI:29035"/>
        <label>1</label>
    </ligand>
</feature>
<feature type="binding site" evidence="2">
    <location>
        <position position="120"/>
    </location>
    <ligand>
        <name>Mn(2+)</name>
        <dbReference type="ChEBI" id="CHEBI:29035"/>
        <label>1</label>
    </ligand>
</feature>
<gene>
    <name evidence="2" type="primary">PA</name>
</gene>
<dbReference type="EC" id="3.1.-.-" evidence="2"/>
<dbReference type="EMBL" id="M26076">
    <property type="protein sequence ID" value="AAA43675.1"/>
    <property type="molecule type" value="Genomic_RNA"/>
</dbReference>
<dbReference type="PDB" id="1YN6">
    <property type="method" value="X-ray"/>
    <property type="resolution" value="2.20 A"/>
    <property type="chains" value="C=224-233"/>
</dbReference>
<dbReference type="PDB" id="1YN7">
    <property type="method" value="X-ray"/>
    <property type="resolution" value="2.20 A"/>
    <property type="chains" value="C=224-233"/>
</dbReference>
<dbReference type="PDB" id="3PQY">
    <property type="method" value="X-ray"/>
    <property type="resolution" value="3.19 A"/>
    <property type="chains" value="C/H/M/R=224-233"/>
</dbReference>
<dbReference type="PDBsum" id="1YN6"/>
<dbReference type="PDBsum" id="1YN7"/>
<dbReference type="PDBsum" id="3PQY"/>
<dbReference type="SMR" id="P13175"/>
<dbReference type="MEROPS" id="S62.001"/>
<dbReference type="EvolutionaryTrace" id="P13175"/>
<dbReference type="GO" id="GO:0030430">
    <property type="term" value="C:host cell cytoplasm"/>
    <property type="evidence" value="ECO:0007669"/>
    <property type="project" value="UniProtKB-SubCell"/>
</dbReference>
<dbReference type="GO" id="GO:0042025">
    <property type="term" value="C:host cell nucleus"/>
    <property type="evidence" value="ECO:0007669"/>
    <property type="project" value="UniProtKB-SubCell"/>
</dbReference>
<dbReference type="GO" id="GO:0004519">
    <property type="term" value="F:endonuclease activity"/>
    <property type="evidence" value="ECO:0007669"/>
    <property type="project" value="UniProtKB-KW"/>
</dbReference>
<dbReference type="GO" id="GO:0046872">
    <property type="term" value="F:metal ion binding"/>
    <property type="evidence" value="ECO:0007669"/>
    <property type="project" value="UniProtKB-KW"/>
</dbReference>
<dbReference type="GO" id="GO:0003723">
    <property type="term" value="F:RNA binding"/>
    <property type="evidence" value="ECO:0007669"/>
    <property type="project" value="UniProtKB-UniRule"/>
</dbReference>
<dbReference type="GO" id="GO:0075526">
    <property type="term" value="P:cap snatching"/>
    <property type="evidence" value="ECO:0007669"/>
    <property type="project" value="UniProtKB-UniRule"/>
</dbReference>
<dbReference type="GO" id="GO:0006351">
    <property type="term" value="P:DNA-templated transcription"/>
    <property type="evidence" value="ECO:0007669"/>
    <property type="project" value="UniProtKB-UniRule"/>
</dbReference>
<dbReference type="GO" id="GO:0039657">
    <property type="term" value="P:symbiont-mediated suppression of host gene expression"/>
    <property type="evidence" value="ECO:0007669"/>
    <property type="project" value="UniProtKB-KW"/>
</dbReference>
<dbReference type="GO" id="GO:0039523">
    <property type="term" value="P:symbiont-mediated suppression of host mRNA transcription via inhibition of RNA polymerase II activity"/>
    <property type="evidence" value="ECO:0007669"/>
    <property type="project" value="UniProtKB-UniRule"/>
</dbReference>
<dbReference type="GO" id="GO:0039694">
    <property type="term" value="P:viral RNA genome replication"/>
    <property type="evidence" value="ECO:0007669"/>
    <property type="project" value="InterPro"/>
</dbReference>
<dbReference type="GO" id="GO:0075523">
    <property type="term" value="P:viral translational frameshifting"/>
    <property type="evidence" value="ECO:0007669"/>
    <property type="project" value="UniProtKB-KW"/>
</dbReference>
<dbReference type="FunFam" id="3.40.91.90:FF:000001">
    <property type="entry name" value="Polymerase acidic protein"/>
    <property type="match status" value="1"/>
</dbReference>
<dbReference type="Gene3D" id="3.40.91.90">
    <property type="entry name" value="Influenza RNA-dependent RNA polymerase subunit PA, endonuclease domain"/>
    <property type="match status" value="1"/>
</dbReference>
<dbReference type="HAMAP" id="MF_04063">
    <property type="entry name" value="INFV_PA"/>
    <property type="match status" value="1"/>
</dbReference>
<dbReference type="InterPro" id="IPR037534">
    <property type="entry name" value="INFV_PA"/>
</dbReference>
<dbReference type="InterPro" id="IPR001009">
    <property type="entry name" value="PA/PA-X"/>
</dbReference>
<dbReference type="InterPro" id="IPR038372">
    <property type="entry name" value="PA/PA-X_sf"/>
</dbReference>
<dbReference type="Pfam" id="PF00603">
    <property type="entry name" value="Flu_PA"/>
    <property type="match status" value="1"/>
</dbReference>
<reference key="1">
    <citation type="journal article" date="1989" name="Virology">
        <title>Evolutionary pathways of the PA genes of influenza A viruses.</title>
        <authorList>
            <person name="Okazaki K."/>
            <person name="Kawaoka Y."/>
            <person name="Webster R.G."/>
        </authorList>
    </citation>
    <scope>NUCLEOTIDE SEQUENCE [GENOMIC RNA]</scope>
</reference>
<reference key="2">
    <citation type="journal article" date="2005" name="Nat. Immunol.">
        <title>Favorite flavors of surfaces.</title>
        <authorList>
            <person name="Jones E.Y."/>
        </authorList>
    </citation>
    <scope>X-RAY CRYSTALLOGRAPHY (2.2 ANGSTROMS) OF 224-233</scope>
</reference>
<organism>
    <name type="scientific">Influenza A virus (strain A/Swine/Iowa/15/1930 H1N1)</name>
    <dbReference type="NCBI Taxonomy" id="380342"/>
    <lineage>
        <taxon>Viruses</taxon>
        <taxon>Riboviria</taxon>
        <taxon>Orthornavirae</taxon>
        <taxon>Negarnaviricota</taxon>
        <taxon>Polyploviricotina</taxon>
        <taxon>Insthoviricetes</taxon>
        <taxon>Articulavirales</taxon>
        <taxon>Orthomyxoviridae</taxon>
        <taxon>Alphainfluenzavirus</taxon>
        <taxon>Alphainfluenzavirus influenzae</taxon>
        <taxon>Influenza A virus</taxon>
    </lineage>
</organism>
<accession>P13175</accession>
<name>PA_I30A0</name>
<organismHost>
    <name type="scientific">Aves</name>
    <dbReference type="NCBI Taxonomy" id="8782"/>
</organismHost>
<organismHost>
    <name type="scientific">Homo sapiens</name>
    <name type="common">Human</name>
    <dbReference type="NCBI Taxonomy" id="9606"/>
</organismHost>
<organismHost>
    <name type="scientific">Sus scrofa</name>
    <name type="common">Pig</name>
    <dbReference type="NCBI Taxonomy" id="9823"/>
</organismHost>
<protein>
    <recommendedName>
        <fullName evidence="2">Polymerase acidic protein</fullName>
        <ecNumber evidence="2">3.1.-.-</ecNumber>
    </recommendedName>
    <alternativeName>
        <fullName evidence="2">RNA-directed RNA polymerase subunit P2</fullName>
    </alternativeName>
</protein>
<comment type="function">
    <text evidence="2">Plays an essential role in viral RNA transcription and replication by forming the heterotrimeric polymerase complex together with PB1 and PB2 subunits. The complex transcribes viral mRNAs by using a unique mechanism called cap-snatching. It consists in the hijacking and cleavage of host capped pre-mRNAs. These short capped RNAs are then used as primers for viral mRNAs. The PB2 subunit is responsible for the binding of the 5' cap of cellular pre-mRNAs which are subsequently cleaved after 10-13 nucleotides by the PA subunit that carries the endonuclease activity.</text>
</comment>
<comment type="cofactor">
    <cofactor evidence="2">
        <name>Mn(2+)</name>
        <dbReference type="ChEBI" id="CHEBI:29035"/>
    </cofactor>
    <text evidence="2">Binds 2 manganese ions per subunit.</text>
</comment>
<comment type="subunit">
    <text evidence="1 2">Influenza RNA polymerase is composed of three subunits: PB1, PB2 and PA. Interacts (via C-terminus) with PB1 (via N-terminus).</text>
</comment>
<comment type="subcellular location">
    <subcellularLocation>
        <location evidence="2">Host cytoplasm</location>
    </subcellularLocation>
    <subcellularLocation>
        <location evidence="2">Host nucleus</location>
    </subcellularLocation>
    <text evidence="1 2">PB1 and PA are transported in the host nucleus as a complex.</text>
</comment>
<comment type="alternative products">
    <event type="ribosomal frameshifting"/>
    <isoform>
        <id>P13175-1</id>
        <name>PA</name>
        <sequence type="displayed"/>
    </isoform>
    <isoform>
        <id>P0DJV0-1</id>
        <name>PA-X</name>
        <sequence type="external"/>
    </isoform>
</comment>
<comment type="PTM">
    <text evidence="1 2">Phosphorylated on serines and threonines by host kinases, including human casein kinase II.</text>
</comment>
<comment type="similarity">
    <text evidence="2">Belongs to the influenza viruses PA family.</text>
</comment>